<feature type="chain" id="PRO_0000102482" description="Endoribonuclease YbeY">
    <location>
        <begin position="1"/>
        <end position="156"/>
    </location>
</feature>
<feature type="binding site" evidence="1">
    <location>
        <position position="115"/>
    </location>
    <ligand>
        <name>Zn(2+)</name>
        <dbReference type="ChEBI" id="CHEBI:29105"/>
        <note>catalytic</note>
    </ligand>
</feature>
<feature type="binding site" evidence="1">
    <location>
        <position position="119"/>
    </location>
    <ligand>
        <name>Zn(2+)</name>
        <dbReference type="ChEBI" id="CHEBI:29105"/>
        <note>catalytic</note>
    </ligand>
</feature>
<feature type="binding site" evidence="1">
    <location>
        <position position="125"/>
    </location>
    <ligand>
        <name>Zn(2+)</name>
        <dbReference type="ChEBI" id="CHEBI:29105"/>
        <note>catalytic</note>
    </ligand>
</feature>
<organism>
    <name type="scientific">Mannheimia succiniciproducens (strain KCTC 0769BP / MBEL55E)</name>
    <dbReference type="NCBI Taxonomy" id="221988"/>
    <lineage>
        <taxon>Bacteria</taxon>
        <taxon>Pseudomonadati</taxon>
        <taxon>Pseudomonadota</taxon>
        <taxon>Gammaproteobacteria</taxon>
        <taxon>Pasteurellales</taxon>
        <taxon>Pasteurellaceae</taxon>
        <taxon>Basfia</taxon>
    </lineage>
</organism>
<sequence>MMKTVTIDLQIASEDQSNLPTLEQFTLWATNAVRAEHFEPEITIRIVDEAESHELNFTYRGKDRPTNVLSFPFECPEEVELPLLGDLVICRQVVEREAQEQGKPLTAHWAHMVVHGSLHLLGYDHIEDDEAVEMESLETEIMTGLGFEDPYSYDEE</sequence>
<keyword id="KW-0963">Cytoplasm</keyword>
<keyword id="KW-0255">Endonuclease</keyword>
<keyword id="KW-0378">Hydrolase</keyword>
<keyword id="KW-0479">Metal-binding</keyword>
<keyword id="KW-0540">Nuclease</keyword>
<keyword id="KW-0690">Ribosome biogenesis</keyword>
<keyword id="KW-0698">rRNA processing</keyword>
<keyword id="KW-0862">Zinc</keyword>
<proteinExistence type="inferred from homology"/>
<reference key="1">
    <citation type="journal article" date="2004" name="Nat. Biotechnol.">
        <title>The genome sequence of the capnophilic rumen bacterium Mannheimia succiniciproducens.</title>
        <authorList>
            <person name="Hong S.H."/>
            <person name="Kim J.S."/>
            <person name="Lee S.Y."/>
            <person name="In Y.H."/>
            <person name="Choi S.S."/>
            <person name="Rih J.-K."/>
            <person name="Kim C.H."/>
            <person name="Jeong H."/>
            <person name="Hur C.G."/>
            <person name="Kim J.J."/>
        </authorList>
    </citation>
    <scope>NUCLEOTIDE SEQUENCE [LARGE SCALE GENOMIC DNA]</scope>
    <source>
        <strain>KCTC 0769BP / MBEL55E</strain>
    </source>
</reference>
<gene>
    <name evidence="1" type="primary">ybeY</name>
    <name type="ordered locus">MS1680</name>
</gene>
<name>YBEY_MANSM</name>
<dbReference type="EC" id="3.1.-.-" evidence="1"/>
<dbReference type="EMBL" id="AE016827">
    <property type="protein sequence ID" value="AAU38287.1"/>
    <property type="molecule type" value="Genomic_DNA"/>
</dbReference>
<dbReference type="SMR" id="Q65RX3"/>
<dbReference type="STRING" id="221988.MS1680"/>
<dbReference type="KEGG" id="msu:MS1680"/>
<dbReference type="eggNOG" id="COG0319">
    <property type="taxonomic scope" value="Bacteria"/>
</dbReference>
<dbReference type="HOGENOM" id="CLU_106710_0_1_6"/>
<dbReference type="Proteomes" id="UP000000607">
    <property type="component" value="Chromosome"/>
</dbReference>
<dbReference type="GO" id="GO:0005737">
    <property type="term" value="C:cytoplasm"/>
    <property type="evidence" value="ECO:0007669"/>
    <property type="project" value="UniProtKB-SubCell"/>
</dbReference>
<dbReference type="GO" id="GO:0004222">
    <property type="term" value="F:metalloendopeptidase activity"/>
    <property type="evidence" value="ECO:0007669"/>
    <property type="project" value="InterPro"/>
</dbReference>
<dbReference type="GO" id="GO:0004521">
    <property type="term" value="F:RNA endonuclease activity"/>
    <property type="evidence" value="ECO:0007669"/>
    <property type="project" value="UniProtKB-UniRule"/>
</dbReference>
<dbReference type="GO" id="GO:0008270">
    <property type="term" value="F:zinc ion binding"/>
    <property type="evidence" value="ECO:0007669"/>
    <property type="project" value="UniProtKB-UniRule"/>
</dbReference>
<dbReference type="GO" id="GO:0006364">
    <property type="term" value="P:rRNA processing"/>
    <property type="evidence" value="ECO:0007669"/>
    <property type="project" value="UniProtKB-UniRule"/>
</dbReference>
<dbReference type="Gene3D" id="3.40.390.30">
    <property type="entry name" value="Metalloproteases ('zincins'), catalytic domain"/>
    <property type="match status" value="1"/>
</dbReference>
<dbReference type="HAMAP" id="MF_00009">
    <property type="entry name" value="Endoribonucl_YbeY"/>
    <property type="match status" value="1"/>
</dbReference>
<dbReference type="InterPro" id="IPR023091">
    <property type="entry name" value="MetalPrtase_cat_dom_sf_prd"/>
</dbReference>
<dbReference type="InterPro" id="IPR002036">
    <property type="entry name" value="YbeY"/>
</dbReference>
<dbReference type="InterPro" id="IPR020549">
    <property type="entry name" value="YbeY_CS"/>
</dbReference>
<dbReference type="NCBIfam" id="TIGR00043">
    <property type="entry name" value="rRNA maturation RNase YbeY"/>
    <property type="match status" value="1"/>
</dbReference>
<dbReference type="PANTHER" id="PTHR46986">
    <property type="entry name" value="ENDORIBONUCLEASE YBEY, CHLOROPLASTIC"/>
    <property type="match status" value="1"/>
</dbReference>
<dbReference type="PANTHER" id="PTHR46986:SF1">
    <property type="entry name" value="ENDORIBONUCLEASE YBEY, CHLOROPLASTIC"/>
    <property type="match status" value="1"/>
</dbReference>
<dbReference type="Pfam" id="PF02130">
    <property type="entry name" value="YbeY"/>
    <property type="match status" value="1"/>
</dbReference>
<dbReference type="SUPFAM" id="SSF55486">
    <property type="entry name" value="Metalloproteases ('zincins'), catalytic domain"/>
    <property type="match status" value="1"/>
</dbReference>
<dbReference type="PROSITE" id="PS01306">
    <property type="entry name" value="UPF0054"/>
    <property type="match status" value="1"/>
</dbReference>
<protein>
    <recommendedName>
        <fullName evidence="1">Endoribonuclease YbeY</fullName>
        <ecNumber evidence="1">3.1.-.-</ecNumber>
    </recommendedName>
</protein>
<accession>Q65RX3</accession>
<comment type="function">
    <text evidence="1">Single strand-specific metallo-endoribonuclease involved in late-stage 70S ribosome quality control and in maturation of the 3' terminus of the 16S rRNA.</text>
</comment>
<comment type="cofactor">
    <cofactor evidence="1">
        <name>Zn(2+)</name>
        <dbReference type="ChEBI" id="CHEBI:29105"/>
    </cofactor>
    <text evidence="1">Binds 1 zinc ion.</text>
</comment>
<comment type="subcellular location">
    <subcellularLocation>
        <location evidence="1">Cytoplasm</location>
    </subcellularLocation>
</comment>
<comment type="similarity">
    <text evidence="1">Belongs to the endoribonuclease YbeY family.</text>
</comment>
<evidence type="ECO:0000255" key="1">
    <source>
        <dbReference type="HAMAP-Rule" id="MF_00009"/>
    </source>
</evidence>